<comment type="function">
    <text evidence="1">Catalyzes the oxidation of 5,10-methylenetetrahydrofolate to 5,10-methenyltetrahydrofolate and then the hydrolysis of 5,10-methenyltetrahydrofolate to 10-formyltetrahydrofolate.</text>
</comment>
<comment type="catalytic activity">
    <reaction>
        <text>(6R)-5,10-methylene-5,6,7,8-tetrahydrofolate + NADP(+) = (6R)-5,10-methenyltetrahydrofolate + NADPH</text>
        <dbReference type="Rhea" id="RHEA:22812"/>
        <dbReference type="ChEBI" id="CHEBI:15636"/>
        <dbReference type="ChEBI" id="CHEBI:57455"/>
        <dbReference type="ChEBI" id="CHEBI:57783"/>
        <dbReference type="ChEBI" id="CHEBI:58349"/>
        <dbReference type="EC" id="1.5.1.5"/>
    </reaction>
</comment>
<comment type="catalytic activity">
    <reaction>
        <text>(6R)-5,10-methenyltetrahydrofolate + H2O = (6R)-10-formyltetrahydrofolate + H(+)</text>
        <dbReference type="Rhea" id="RHEA:23700"/>
        <dbReference type="ChEBI" id="CHEBI:15377"/>
        <dbReference type="ChEBI" id="CHEBI:15378"/>
        <dbReference type="ChEBI" id="CHEBI:57455"/>
        <dbReference type="ChEBI" id="CHEBI:195366"/>
        <dbReference type="EC" id="3.5.4.9"/>
    </reaction>
</comment>
<comment type="pathway">
    <text>One-carbon metabolism; tetrahydrofolate interconversion.</text>
</comment>
<comment type="subunit">
    <text evidence="1">Homodimer.</text>
</comment>
<comment type="subcellular location">
    <subcellularLocation>
        <location evidence="2">Mitochondrion</location>
    </subcellularLocation>
</comment>
<comment type="alternative products">
    <event type="alternative splicing"/>
    <isoform>
        <id>A2RVV7-1</id>
        <name>1</name>
        <sequence type="displayed"/>
    </isoform>
    <isoform>
        <id>A2RVV7-2</id>
        <name>2</name>
        <sequence type="described" ref="VSP_053392"/>
    </isoform>
    <isoform>
        <id>A2RVV7-3</id>
        <name>3</name>
        <sequence type="described" ref="VSP_053393 VSP_053394"/>
    </isoform>
    <isoform>
        <id>A2RVV7-4</id>
        <name>4</name>
        <sequence type="described" ref="VSP_053390 VSP_053391"/>
    </isoform>
</comment>
<comment type="disruption phenotype">
    <text evidence="3">No visible phenotype. Fold1, puru1 and puru2 triple mutant shows no photorespiratory phenotype.</text>
</comment>
<comment type="similarity">
    <text evidence="6">Belongs to the tetrahydrofolate dehydrogenase/cyclohydrolase family.</text>
</comment>
<comment type="sequence caution" evidence="6">
    <conflict type="erroneous initiation">
        <sequence resource="EMBL-CDS" id="AAC67352"/>
    </conflict>
    <text>Truncated N-terminus.</text>
</comment>
<feature type="transit peptide" description="Mitochondrion" evidence="2">
    <location>
        <begin position="1"/>
        <end position="23"/>
    </location>
</feature>
<feature type="chain" id="PRO_0000424344" description="Bifunctional protein FolD 1, mitochondrial">
    <location>
        <begin position="24"/>
        <end position="352"/>
    </location>
</feature>
<feature type="splice variant" id="VSP_053390" description="In isoform 4." evidence="5">
    <original>HLNESKILNMVRLEKDVDGFHP</original>
    <variation>VCFSFFSLDVVMGDVSVVDVKD</variation>
    <location>
        <begin position="164"/>
        <end position="185"/>
    </location>
</feature>
<feature type="splice variant" id="VSP_053391" description="In isoform 4." evidence="5">
    <location>
        <begin position="186"/>
        <end position="352"/>
    </location>
</feature>
<feature type="splice variant" id="VSP_053392" description="In isoform 2." evidence="4">
    <original>RHDATVSTVHAFTKDPEHITRKADIVIAAAGIPNLVRGSWLKPGAVVIDVGTTPVEDSSCEFGYRLVGDVCYEEALGVASAITPVPGGVGPMTITMLLCNTLEAAKRIFL</original>
    <variation>A</variation>
    <location>
        <begin position="243"/>
        <end position="352"/>
    </location>
</feature>
<feature type="splice variant" id="VSP_053393" description="In isoform 3." evidence="6">
    <original>GVASAITPVPGGVG</original>
    <variation>DRRLHAVRVINDLF</variation>
    <location>
        <begin position="319"/>
        <end position="332"/>
    </location>
</feature>
<feature type="splice variant" id="VSP_053394" description="In isoform 3." evidence="6">
    <location>
        <begin position="333"/>
        <end position="352"/>
    </location>
</feature>
<dbReference type="EC" id="1.5.1.5"/>
<dbReference type="EC" id="3.5.4.9"/>
<dbReference type="EMBL" id="AC005499">
    <property type="protein sequence ID" value="AAC67352.1"/>
    <property type="status" value="ALT_INIT"/>
    <property type="molecule type" value="Genomic_DNA"/>
</dbReference>
<dbReference type="EMBL" id="CP002685">
    <property type="protein sequence ID" value="AEC09564.1"/>
    <property type="molecule type" value="Genomic_DNA"/>
</dbReference>
<dbReference type="EMBL" id="CP002685">
    <property type="protein sequence ID" value="AEC09565.1"/>
    <property type="molecule type" value="Genomic_DNA"/>
</dbReference>
<dbReference type="EMBL" id="CP002685">
    <property type="protein sequence ID" value="AEC09566.1"/>
    <property type="molecule type" value="Genomic_DNA"/>
</dbReference>
<dbReference type="EMBL" id="CP002685">
    <property type="protein sequence ID" value="AEC09567.1"/>
    <property type="molecule type" value="Genomic_DNA"/>
</dbReference>
<dbReference type="EMBL" id="CP002685">
    <property type="protein sequence ID" value="ANM62489.1"/>
    <property type="molecule type" value="Genomic_DNA"/>
</dbReference>
<dbReference type="EMBL" id="CP002685">
    <property type="protein sequence ID" value="ANM62490.1"/>
    <property type="molecule type" value="Genomic_DNA"/>
</dbReference>
<dbReference type="EMBL" id="CP002685">
    <property type="protein sequence ID" value="ANM62491.1"/>
    <property type="molecule type" value="Genomic_DNA"/>
</dbReference>
<dbReference type="EMBL" id="CP002685">
    <property type="protein sequence ID" value="ANM62492.1"/>
    <property type="molecule type" value="Genomic_DNA"/>
</dbReference>
<dbReference type="EMBL" id="BT004325">
    <property type="protein sequence ID" value="AAO42321.1"/>
    <property type="molecule type" value="mRNA"/>
</dbReference>
<dbReference type="EMBL" id="BT030098">
    <property type="protein sequence ID" value="ABN04836.1"/>
    <property type="molecule type" value="mRNA"/>
</dbReference>
<dbReference type="EMBL" id="AK319160">
    <property type="protein sequence ID" value="BAH57275.1"/>
    <property type="molecule type" value="mRNA"/>
</dbReference>
<dbReference type="PIR" id="G84807">
    <property type="entry name" value="G84807"/>
</dbReference>
<dbReference type="RefSeq" id="NP_001031508.1">
    <molecule id="A2RVV7-2"/>
    <property type="nucleotide sequence ID" value="NM_001036431.3"/>
</dbReference>
<dbReference type="RefSeq" id="NP_001118472.1">
    <molecule id="A2RVV7-1"/>
    <property type="nucleotide sequence ID" value="NM_001125000.3"/>
</dbReference>
<dbReference type="RefSeq" id="NP_001189703.1">
    <molecule id="A2RVV7-3"/>
    <property type="nucleotide sequence ID" value="NM_001202774.1"/>
</dbReference>
<dbReference type="RefSeq" id="NP_001324644.1">
    <molecule id="A2RVV7-4"/>
    <property type="nucleotide sequence ID" value="NM_001336716.1"/>
</dbReference>
<dbReference type="RefSeq" id="NP_001324645.1">
    <molecule id="A2RVV7-4"/>
    <property type="nucleotide sequence ID" value="NM_001336717.1"/>
</dbReference>
<dbReference type="RefSeq" id="NP_001324646.1">
    <molecule id="A2RVV7-4"/>
    <property type="nucleotide sequence ID" value="NM_001336718.1"/>
</dbReference>
<dbReference type="RefSeq" id="NP_001324647.1">
    <molecule id="A2RVV7-4"/>
    <property type="nucleotide sequence ID" value="NM_001336715.1"/>
</dbReference>
<dbReference type="RefSeq" id="NP_181400.2">
    <molecule id="A2RVV7-1"/>
    <property type="nucleotide sequence ID" value="NM_129423.6"/>
</dbReference>
<dbReference type="SMR" id="A2RVV7"/>
<dbReference type="BioGRID" id="3790">
    <property type="interactions" value="1"/>
</dbReference>
<dbReference type="FunCoup" id="A2RVV7">
    <property type="interactions" value="1617"/>
</dbReference>
<dbReference type="IntAct" id="A2RVV7">
    <property type="interactions" value="1"/>
</dbReference>
<dbReference type="STRING" id="3702.A2RVV7"/>
<dbReference type="PaxDb" id="3702-AT2G38660.3"/>
<dbReference type="ProteomicsDB" id="230109">
    <molecule id="A2RVV7-1"/>
</dbReference>
<dbReference type="EnsemblPlants" id="AT2G38660.1">
    <molecule id="A2RVV7-1"/>
    <property type="protein sequence ID" value="AT2G38660.1"/>
    <property type="gene ID" value="AT2G38660"/>
</dbReference>
<dbReference type="EnsemblPlants" id="AT2G38660.2">
    <molecule id="A2RVV7-2"/>
    <property type="protein sequence ID" value="AT2G38660.2"/>
    <property type="gene ID" value="AT2G38660"/>
</dbReference>
<dbReference type="EnsemblPlants" id="AT2G38660.3">
    <molecule id="A2RVV7-1"/>
    <property type="protein sequence ID" value="AT2G38660.3"/>
    <property type="gene ID" value="AT2G38660"/>
</dbReference>
<dbReference type="EnsemblPlants" id="AT2G38660.4">
    <molecule id="A2RVV7-3"/>
    <property type="protein sequence ID" value="AT2G38660.4"/>
    <property type="gene ID" value="AT2G38660"/>
</dbReference>
<dbReference type="EnsemblPlants" id="AT2G38660.5">
    <molecule id="A2RVV7-4"/>
    <property type="protein sequence ID" value="AT2G38660.5"/>
    <property type="gene ID" value="AT2G38660"/>
</dbReference>
<dbReference type="EnsemblPlants" id="AT2G38660.6">
    <molecule id="A2RVV7-4"/>
    <property type="protein sequence ID" value="AT2G38660.6"/>
    <property type="gene ID" value="AT2G38660"/>
</dbReference>
<dbReference type="EnsemblPlants" id="AT2G38660.7">
    <molecule id="A2RVV7-4"/>
    <property type="protein sequence ID" value="AT2G38660.7"/>
    <property type="gene ID" value="AT2G38660"/>
</dbReference>
<dbReference type="EnsemblPlants" id="AT2G38660.8">
    <molecule id="A2RVV7-4"/>
    <property type="protein sequence ID" value="AT2G38660.8"/>
    <property type="gene ID" value="AT2G38660"/>
</dbReference>
<dbReference type="GeneID" id="818448"/>
<dbReference type="Gramene" id="AT2G38660.1">
    <molecule id="A2RVV7-1"/>
    <property type="protein sequence ID" value="AT2G38660.1"/>
    <property type="gene ID" value="AT2G38660"/>
</dbReference>
<dbReference type="Gramene" id="AT2G38660.2">
    <molecule id="A2RVV7-2"/>
    <property type="protein sequence ID" value="AT2G38660.2"/>
    <property type="gene ID" value="AT2G38660"/>
</dbReference>
<dbReference type="Gramene" id="AT2G38660.3">
    <molecule id="A2RVV7-1"/>
    <property type="protein sequence ID" value="AT2G38660.3"/>
    <property type="gene ID" value="AT2G38660"/>
</dbReference>
<dbReference type="Gramene" id="AT2G38660.4">
    <molecule id="A2RVV7-3"/>
    <property type="protein sequence ID" value="AT2G38660.4"/>
    <property type="gene ID" value="AT2G38660"/>
</dbReference>
<dbReference type="Gramene" id="AT2G38660.5">
    <molecule id="A2RVV7-4"/>
    <property type="protein sequence ID" value="AT2G38660.5"/>
    <property type="gene ID" value="AT2G38660"/>
</dbReference>
<dbReference type="Gramene" id="AT2G38660.6">
    <molecule id="A2RVV7-4"/>
    <property type="protein sequence ID" value="AT2G38660.6"/>
    <property type="gene ID" value="AT2G38660"/>
</dbReference>
<dbReference type="Gramene" id="AT2G38660.7">
    <molecule id="A2RVV7-4"/>
    <property type="protein sequence ID" value="AT2G38660.7"/>
    <property type="gene ID" value="AT2G38660"/>
</dbReference>
<dbReference type="Gramene" id="AT2G38660.8">
    <molecule id="A2RVV7-4"/>
    <property type="protein sequence ID" value="AT2G38660.8"/>
    <property type="gene ID" value="AT2G38660"/>
</dbReference>
<dbReference type="KEGG" id="ath:AT2G38660"/>
<dbReference type="Araport" id="AT2G38660"/>
<dbReference type="TAIR" id="AT2G38660"/>
<dbReference type="eggNOG" id="KOG0089">
    <property type="taxonomic scope" value="Eukaryota"/>
</dbReference>
<dbReference type="HOGENOM" id="CLU_034045_1_2_1"/>
<dbReference type="InParanoid" id="A2RVV7"/>
<dbReference type="OMA" id="YGCATPK"/>
<dbReference type="PhylomeDB" id="A2RVV7"/>
<dbReference type="BioCyc" id="ARA:AT2G38660-MONOMER"/>
<dbReference type="UniPathway" id="UPA00193"/>
<dbReference type="PRO" id="PR:A2RVV7"/>
<dbReference type="Proteomes" id="UP000006548">
    <property type="component" value="Chromosome 2"/>
</dbReference>
<dbReference type="ExpressionAtlas" id="A2RVV7">
    <property type="expression patterns" value="baseline and differential"/>
</dbReference>
<dbReference type="GO" id="GO:0005739">
    <property type="term" value="C:mitochondrion"/>
    <property type="evidence" value="ECO:0007669"/>
    <property type="project" value="UniProtKB-SubCell"/>
</dbReference>
<dbReference type="GO" id="GO:0004477">
    <property type="term" value="F:methenyltetrahydrofolate cyclohydrolase activity"/>
    <property type="evidence" value="ECO:0007669"/>
    <property type="project" value="UniProtKB-EC"/>
</dbReference>
<dbReference type="GO" id="GO:0004488">
    <property type="term" value="F:methylenetetrahydrofolate dehydrogenase (NADP+) activity"/>
    <property type="evidence" value="ECO:0007669"/>
    <property type="project" value="UniProtKB-EC"/>
</dbReference>
<dbReference type="GO" id="GO:0009853">
    <property type="term" value="P:photorespiration"/>
    <property type="evidence" value="ECO:0007669"/>
    <property type="project" value="UniProtKB-KW"/>
</dbReference>
<dbReference type="GO" id="GO:0035999">
    <property type="term" value="P:tetrahydrofolate interconversion"/>
    <property type="evidence" value="ECO:0007669"/>
    <property type="project" value="UniProtKB-UniPathway"/>
</dbReference>
<dbReference type="CDD" id="cd01080">
    <property type="entry name" value="NAD_bind_m-THF_DH_Cyclohyd"/>
    <property type="match status" value="1"/>
</dbReference>
<dbReference type="FunFam" id="3.40.50.720:FF:000006">
    <property type="entry name" value="Bifunctional protein FolD"/>
    <property type="match status" value="1"/>
</dbReference>
<dbReference type="FunFam" id="3.40.50.10860:FF:000005">
    <property type="entry name" value="C-1-tetrahydrofolate synthase, cytoplasmic, putative"/>
    <property type="match status" value="1"/>
</dbReference>
<dbReference type="Gene3D" id="3.40.50.10860">
    <property type="entry name" value="Leucine Dehydrogenase, chain A, domain 1"/>
    <property type="match status" value="1"/>
</dbReference>
<dbReference type="Gene3D" id="3.40.50.720">
    <property type="entry name" value="NAD(P)-binding Rossmann-like Domain"/>
    <property type="match status" value="1"/>
</dbReference>
<dbReference type="HAMAP" id="MF_01576">
    <property type="entry name" value="THF_DHG_CYH"/>
    <property type="match status" value="1"/>
</dbReference>
<dbReference type="InterPro" id="IPR046346">
    <property type="entry name" value="Aminoacid_DH-like_N_sf"/>
</dbReference>
<dbReference type="InterPro" id="IPR036291">
    <property type="entry name" value="NAD(P)-bd_dom_sf"/>
</dbReference>
<dbReference type="InterPro" id="IPR000672">
    <property type="entry name" value="THF_DH/CycHdrlase"/>
</dbReference>
<dbReference type="InterPro" id="IPR020630">
    <property type="entry name" value="THF_DH/CycHdrlase_cat_dom"/>
</dbReference>
<dbReference type="InterPro" id="IPR020867">
    <property type="entry name" value="THF_DH/CycHdrlase_CS"/>
</dbReference>
<dbReference type="InterPro" id="IPR020631">
    <property type="entry name" value="THF_DH/CycHdrlase_NAD-bd_dom"/>
</dbReference>
<dbReference type="PANTHER" id="PTHR48099:SF10">
    <property type="entry name" value="BIFUNCTIONAL PROTEIN FOLD 1, MITOCHONDRIAL"/>
    <property type="match status" value="1"/>
</dbReference>
<dbReference type="PANTHER" id="PTHR48099">
    <property type="entry name" value="C-1-TETRAHYDROFOLATE SYNTHASE, CYTOPLASMIC-RELATED"/>
    <property type="match status" value="1"/>
</dbReference>
<dbReference type="Pfam" id="PF00763">
    <property type="entry name" value="THF_DHG_CYH"/>
    <property type="match status" value="1"/>
</dbReference>
<dbReference type="Pfam" id="PF02882">
    <property type="entry name" value="THF_DHG_CYH_C"/>
    <property type="match status" value="1"/>
</dbReference>
<dbReference type="PRINTS" id="PR00085">
    <property type="entry name" value="THFDHDRGNASE"/>
</dbReference>
<dbReference type="SUPFAM" id="SSF53223">
    <property type="entry name" value="Aminoacid dehydrogenase-like, N-terminal domain"/>
    <property type="match status" value="1"/>
</dbReference>
<dbReference type="SUPFAM" id="SSF51735">
    <property type="entry name" value="NAD(P)-binding Rossmann-fold domains"/>
    <property type="match status" value="1"/>
</dbReference>
<dbReference type="PROSITE" id="PS00767">
    <property type="entry name" value="THF_DHG_CYH_2"/>
    <property type="match status" value="1"/>
</dbReference>
<evidence type="ECO:0000250" key="1"/>
<evidence type="ECO:0000255" key="2"/>
<evidence type="ECO:0000269" key="3">
    <source>
    </source>
</evidence>
<evidence type="ECO:0000303" key="4">
    <source>
    </source>
</evidence>
<evidence type="ECO:0000303" key="5">
    <source>
    </source>
</evidence>
<evidence type="ECO:0000305" key="6"/>
<keyword id="KW-0025">Alternative splicing</keyword>
<keyword id="KW-0378">Hydrolase</keyword>
<keyword id="KW-0496">Mitochondrion</keyword>
<keyword id="KW-0511">Multifunctional enzyme</keyword>
<keyword id="KW-0521">NADP</keyword>
<keyword id="KW-0554">One-carbon metabolism</keyword>
<keyword id="KW-0560">Oxidoreductase</keyword>
<keyword id="KW-0601">Photorespiration</keyword>
<keyword id="KW-1185">Reference proteome</keyword>
<keyword id="KW-0809">Transit peptide</keyword>
<organism>
    <name type="scientific">Arabidopsis thaliana</name>
    <name type="common">Mouse-ear cress</name>
    <dbReference type="NCBI Taxonomy" id="3702"/>
    <lineage>
        <taxon>Eukaryota</taxon>
        <taxon>Viridiplantae</taxon>
        <taxon>Streptophyta</taxon>
        <taxon>Embryophyta</taxon>
        <taxon>Tracheophyta</taxon>
        <taxon>Spermatophyta</taxon>
        <taxon>Magnoliopsida</taxon>
        <taxon>eudicotyledons</taxon>
        <taxon>Gunneridae</taxon>
        <taxon>Pentapetalae</taxon>
        <taxon>rosids</taxon>
        <taxon>malvids</taxon>
        <taxon>Brassicales</taxon>
        <taxon>Brassicaceae</taxon>
        <taxon>Camelineae</taxon>
        <taxon>Arabidopsis</taxon>
    </lineage>
</organism>
<proteinExistence type="evidence at transcript level"/>
<name>FOLD1_ARATH</name>
<accession>A2RVV7</accession>
<accession>C0Z3J6</accession>
<accession>F4ITV6</accession>
<accession>Q84W19</accession>
<accession>Q9ZVI8</accession>
<protein>
    <recommendedName>
        <fullName>Bifunctional protein FolD 1, mitochondrial</fullName>
    </recommendedName>
    <domain>
        <recommendedName>
            <fullName>Methylenetetrahydrofolate dehydrogenase</fullName>
            <ecNumber>1.5.1.5</ecNumber>
        </recommendedName>
    </domain>
    <domain>
        <recommendedName>
            <fullName>Methenyltetrahydrofolate cyclohydrolase</fullName>
            <ecNumber>3.5.4.9</ecNumber>
        </recommendedName>
    </domain>
</protein>
<gene>
    <name type="primary">FOLD1</name>
    <name type="synonym">DHC1</name>
    <name type="ordered locus">At2g38660</name>
    <name type="ORF">T6A23.14</name>
</gene>
<sequence>MLMIARKALASAHTKAFRLATRDVHCFSSILVSPPLVSLDLPENWIPYSDPPPPVSFETEQKTVVIDGNVIAEEIRTKIISEVGKMKKAVGKVPGLAVVLVGEQRDSQTYVRNKIKACEETGIKSVLAELPEDCTEGQIISVLRKFNEDTSIHGILVQLPLPQHLNESKILNMVRLEKDVDGFHPLNVGNLAMRGREPLFVSCTPKGCVELLIRTGVEIAGKNAVVIGRSNIVGLPMSLLLQRHDATVSTVHAFTKDPEHITRKADIVIAAAGIPNLVRGSWLKPGAVVIDVGTTPVEDSSCEFGYRLVGDVCYEEALGVASAITPVPGGVGPMTITMLLCNTLEAAKRIFL</sequence>
<reference key="1">
    <citation type="journal article" date="1999" name="Nature">
        <title>Sequence and analysis of chromosome 2 of the plant Arabidopsis thaliana.</title>
        <authorList>
            <person name="Lin X."/>
            <person name="Kaul S."/>
            <person name="Rounsley S.D."/>
            <person name="Shea T.P."/>
            <person name="Benito M.-I."/>
            <person name="Town C.D."/>
            <person name="Fujii C.Y."/>
            <person name="Mason T.M."/>
            <person name="Bowman C.L."/>
            <person name="Barnstead M.E."/>
            <person name="Feldblyum T.V."/>
            <person name="Buell C.R."/>
            <person name="Ketchum K.A."/>
            <person name="Lee J.J."/>
            <person name="Ronning C.M."/>
            <person name="Koo H.L."/>
            <person name="Moffat K.S."/>
            <person name="Cronin L.A."/>
            <person name="Shen M."/>
            <person name="Pai G."/>
            <person name="Van Aken S."/>
            <person name="Umayam L."/>
            <person name="Tallon L.J."/>
            <person name="Gill J.E."/>
            <person name="Adams M.D."/>
            <person name="Carrera A.J."/>
            <person name="Creasy T.H."/>
            <person name="Goodman H.M."/>
            <person name="Somerville C.R."/>
            <person name="Copenhaver G.P."/>
            <person name="Preuss D."/>
            <person name="Nierman W.C."/>
            <person name="White O."/>
            <person name="Eisen J.A."/>
            <person name="Salzberg S.L."/>
            <person name="Fraser C.M."/>
            <person name="Venter J.C."/>
        </authorList>
    </citation>
    <scope>NUCLEOTIDE SEQUENCE [LARGE SCALE GENOMIC DNA]</scope>
    <source>
        <strain>cv. Columbia</strain>
    </source>
</reference>
<reference key="2">
    <citation type="journal article" date="2017" name="Plant J.">
        <title>Araport11: a complete reannotation of the Arabidopsis thaliana reference genome.</title>
        <authorList>
            <person name="Cheng C.Y."/>
            <person name="Krishnakumar V."/>
            <person name="Chan A.P."/>
            <person name="Thibaud-Nissen F."/>
            <person name="Schobel S."/>
            <person name="Town C.D."/>
        </authorList>
    </citation>
    <scope>GENOME REANNOTATION</scope>
    <source>
        <strain>cv. Columbia</strain>
    </source>
</reference>
<reference key="3">
    <citation type="journal article" date="2003" name="Science">
        <title>Empirical analysis of transcriptional activity in the Arabidopsis genome.</title>
        <authorList>
            <person name="Yamada K."/>
            <person name="Lim J."/>
            <person name="Dale J.M."/>
            <person name="Chen H."/>
            <person name="Shinn P."/>
            <person name="Palm C.J."/>
            <person name="Southwick A.M."/>
            <person name="Wu H.C."/>
            <person name="Kim C.J."/>
            <person name="Nguyen M."/>
            <person name="Pham P.K."/>
            <person name="Cheuk R.F."/>
            <person name="Karlin-Newmann G."/>
            <person name="Liu S.X."/>
            <person name="Lam B."/>
            <person name="Sakano H."/>
            <person name="Wu T."/>
            <person name="Yu G."/>
            <person name="Miranda M."/>
            <person name="Quach H.L."/>
            <person name="Tripp M."/>
            <person name="Chang C.H."/>
            <person name="Lee J.M."/>
            <person name="Toriumi M.J."/>
            <person name="Chan M.M."/>
            <person name="Tang C.C."/>
            <person name="Onodera C.S."/>
            <person name="Deng J.M."/>
            <person name="Akiyama K."/>
            <person name="Ansari Y."/>
            <person name="Arakawa T."/>
            <person name="Banh J."/>
            <person name="Banno F."/>
            <person name="Bowser L."/>
            <person name="Brooks S.Y."/>
            <person name="Carninci P."/>
            <person name="Chao Q."/>
            <person name="Choy N."/>
            <person name="Enju A."/>
            <person name="Goldsmith A.D."/>
            <person name="Gurjal M."/>
            <person name="Hansen N.F."/>
            <person name="Hayashizaki Y."/>
            <person name="Johnson-Hopson C."/>
            <person name="Hsuan V.W."/>
            <person name="Iida K."/>
            <person name="Karnes M."/>
            <person name="Khan S."/>
            <person name="Koesema E."/>
            <person name="Ishida J."/>
            <person name="Jiang P.X."/>
            <person name="Jones T."/>
            <person name="Kawai J."/>
            <person name="Kamiya A."/>
            <person name="Meyers C."/>
            <person name="Nakajima M."/>
            <person name="Narusaka M."/>
            <person name="Seki M."/>
            <person name="Sakurai T."/>
            <person name="Satou M."/>
            <person name="Tamse R."/>
            <person name="Vaysberg M."/>
            <person name="Wallender E.K."/>
            <person name="Wong C."/>
            <person name="Yamamura Y."/>
            <person name="Yuan S."/>
            <person name="Shinozaki K."/>
            <person name="Davis R.W."/>
            <person name="Theologis A."/>
            <person name="Ecker J.R."/>
        </authorList>
    </citation>
    <scope>NUCLEOTIDE SEQUENCE [LARGE SCALE MRNA] (ISOFORM 2)</scope>
    <source>
        <strain>cv. Columbia</strain>
    </source>
</reference>
<reference key="4">
    <citation type="submission" date="2007-01" db="EMBL/GenBank/DDBJ databases">
        <title>Arabidopsis ORF clones.</title>
        <authorList>
            <person name="Kim C.J."/>
            <person name="Bautista V.R."/>
            <person name="Chen H."/>
            <person name="De Los Reyes C."/>
            <person name="Wu S.Y."/>
            <person name="Ecker J.R."/>
        </authorList>
    </citation>
    <scope>NUCLEOTIDE SEQUENCE [LARGE SCALE MRNA] (ISOFORM 1)</scope>
</reference>
<reference key="5">
    <citation type="journal article" date="2009" name="DNA Res.">
        <title>Analysis of multiple occurrences of alternative splicing events in Arabidopsis thaliana using novel sequenced full-length cDNAs.</title>
        <authorList>
            <person name="Iida K."/>
            <person name="Fukami-Kobayashi K."/>
            <person name="Toyoda A."/>
            <person name="Sakaki Y."/>
            <person name="Kobayashi M."/>
            <person name="Seki M."/>
            <person name="Shinozaki K."/>
        </authorList>
    </citation>
    <scope>NUCLEOTIDE SEQUENCE [LARGE SCALE MRNA] (ISOFORM 4)</scope>
    <source>
        <strain>cv. Columbia</strain>
        <tissue>Rosette leaf</tissue>
    </source>
</reference>
<reference key="6">
    <citation type="journal article" date="2008" name="Plant Cell">
        <title>Arabidopsis 10-formyl tetrahydrofolate deformylases are essential for photorespiration.</title>
        <authorList>
            <person name="Collakova E."/>
            <person name="Goyer A."/>
            <person name="Naponelli V."/>
            <person name="Krassovskaya I."/>
            <person name="Gregory J.F. III"/>
            <person name="Hanson A.D."/>
            <person name="Shachar-Hill Y."/>
        </authorList>
    </citation>
    <scope>DISRUPTION PHENOTYPE</scope>
</reference>